<comment type="function">
    <text evidence="4">As part of the central apparatus of the cilium axoneme may play a role in cilium movement. May play an important role in sperm architecture and function.</text>
</comment>
<comment type="interaction">
    <interactant intactId="EBI-20749422">
        <id>Q9C0B2</id>
    </interactant>
    <interactant intactId="EBI-21372475">
        <id>Q9NUD7</id>
        <label>C20orf96</label>
    </interactant>
    <organismsDiffer>false</organismsDiffer>
    <experiments>2</experiments>
</comment>
<comment type="subcellular location">
    <subcellularLocation>
        <location evidence="1">Cytoplasm</location>
        <location evidence="1">Cytoskeleton</location>
        <location evidence="1">Cilium axoneme</location>
    </subcellularLocation>
    <subcellularLocation>
        <location evidence="4">Cytoplasm</location>
        <location evidence="4">Cytoskeleton</location>
        <location evidence="4">Flagellum axoneme</location>
    </subcellularLocation>
</comment>
<comment type="alternative products">
    <event type="alternative splicing"/>
    <isoform>
        <id>Q9C0B2-1</id>
        <name>1</name>
        <sequence type="displayed"/>
    </isoform>
    <isoform>
        <id>Q9C0B2-2</id>
        <name>2</name>
        <sequence type="described" ref="VSP_057369 VSP_057370"/>
    </isoform>
    <isoform>
        <id>Q9C0B2-3</id>
        <name>3</name>
        <sequence type="described" ref="VSP_032345"/>
    </isoform>
</comment>
<comment type="disease" evidence="4 5">
    <disease id="DI-06590">
        <name>Ciliary dyskinesia, primary, 49, without situs inversus</name>
        <acronym>CILD49</acronym>
        <description>A form of primary ciliary dyskinesia, a disorder characterized by abnormalities of motile cilia. Respiratory infections leading to chronic inflammation and bronchiectasis are recurrent, due to defects in the respiratory cilia. CILD49 is an autosomal recessive form without situs abnormalities. Affected males also show infertility due to defective flagellar morphology and function.</description>
        <dbReference type="MIM" id="620197"/>
    </disease>
    <text>The disease may be caused by variants affecting the gene represented in this entry.</text>
</comment>
<comment type="similarity">
    <text evidence="8">Belongs to the CFAP74 family.</text>
</comment>
<comment type="sequence caution" evidence="8">
    <conflict type="miscellaneous discrepancy">
        <sequence resource="EMBL-CDS" id="AAI14927"/>
    </conflict>
    <text>Probable cloning artifact.</text>
</comment>
<comment type="sequence caution" evidence="8">
    <conflict type="miscellaneous discrepancy">
        <sequence resource="EMBL-CDS" id="BAB21842"/>
    </conflict>
    <text>Probable cloning artifact.</text>
</comment>
<comment type="sequence caution" evidence="8">
    <conflict type="miscellaneous discrepancy">
        <sequence resource="EMBL-CDS" id="CAH10703"/>
    </conflict>
    <text>Probable cloning artifact.</text>
</comment>
<organism>
    <name type="scientific">Homo sapiens</name>
    <name type="common">Human</name>
    <dbReference type="NCBI Taxonomy" id="9606"/>
    <lineage>
        <taxon>Eukaryota</taxon>
        <taxon>Metazoa</taxon>
        <taxon>Chordata</taxon>
        <taxon>Craniata</taxon>
        <taxon>Vertebrata</taxon>
        <taxon>Euteleostomi</taxon>
        <taxon>Mammalia</taxon>
        <taxon>Eutheria</taxon>
        <taxon>Euarchontoglires</taxon>
        <taxon>Primates</taxon>
        <taxon>Haplorrhini</taxon>
        <taxon>Catarrhini</taxon>
        <taxon>Hominidae</taxon>
        <taxon>Homo</taxon>
    </lineage>
</organism>
<gene>
    <name evidence="10" type="primary">CFAP74</name>
    <name evidence="10" type="synonym">C1orf222</name>
    <name evidence="9" type="synonym">KIAA1751</name>
</gene>
<sequence length="1584" mass="178589">MEDDGSLLPEDELLADALLLEDERDELEDPEFDIKCLLQEAEDDVDPGHSSSVKELDTDADKLKKKTAEDRTQAFHLRQNLSALDKMHEEQELFTEKMRGELRACRQRRDLIDKQQEAVAAEIATEEEAGNMAAVGRLQAVSRRLFAELENERDLQSRTEAVLKESENTMWHIEIQEGRLEAFRTADREEVEATGRRLQVRAAEQLCREQEALGKVERNRLLRIRKSLNTQKELGLRHQKLLEDARKNHKVAVRFLKASLGRIREQEKKEEMECHEYMRRRMDAVVALKGSISANRDTLRKFQAWDRAKAELAEQRVQAEKKAILAQGRDAFRHLVHQRRRQELEAQKRAFEEEQKLRKQEIISRILKEEAEEEKRKKQHPPTSARHRLTLRDKTWNYISDFCKKTTVPTNTYTLDYEAAAGPGPSRLLEVVSSELIQGDPGASSEEETLAEPEISGLWNEDYKPYQVPKEDVDRKPVGGTKMDKDILERTVERLRSRVVHKQVVWGREFQGRPFNSKPELLHFQDFDIGKVYKKKITLVNTTYTINYCKLVGVEEHLRDFIHVDFDPPGPLSAGMSCEVLVTFKPMINKDLEGNISFLAQTGEFSVPLKCSTKKCSLSLDKELIDFGSYVVGETTSRTITLTNVGGLGTTFKFLPASEPCEMDDSQSALKLSSLLTYEDKSLYDKAATSFSEQQLEGTESSQADMQSRKELEKLDKEQEEEQPAEPERLTTVIPPSEEQTEITLGEVTEGEIGPFSSIKVPIVFTPVVPGDVQARFKVTFKNPQCPTLHFRVVGVAIDVPVWVPKPSVDLKICMYDRLYQDSVLVHTRSKAALRLKFEVCKELRAHLELLPKTGYIQAQSSYSVQLKFLPRHSLPEDAGRYFDKETRVLEAPMTIWVADQNKPVGFTVHAIVTTSDLELSPSEVDFGYCTIYEAIRTEISLHNHSLLPQEFGFVRLPKFVDVQPNDGFGTILPLETLQFCVIFQPTKAEEHRFQLTCKSEINRCFKLSCRAVGVHPPLELSHYQIKFAATALYDTSVATVYVINSHLSMSSPTHSKPRIGSEDASPMGPTSFEFLLPPDSPITISPSVGTVWPGKRCLVQVAFRPVLPEKLIRQEALPLLNKEMETKSFRKNMAPQRKDLHGLSFSVLRAQNRDKLFKVSVPHVLEMRKRELRPSSDEYQAARATLLRAFQAKFDTFVVPCVVASGDIKDRKGSEPLSFSPHNTLYLELWCPTVAPSVVVTSHKGKTIFNFGDVAVGHRSIKKISIQNVSPEDLALDFSLLNPNGPFVLLNHSSLLRAGGTQVLVLSFSPHESILAQETLDIITKRGTLTLTLMGTGVASMITCSIEGSVLNMGYVIAGESVSSGFKLQNNSLLPIKFSMHLDSLSSTRGRGQQQLPQFLSSPSQRTEVVGTQNLNGQSVFSVAPVKGVMDPGKTQDFTVTFSPDHESLYFSDKLQVVLFEKKISHQILLKGAACQHMMFVEGGDPLDVPVESLTAIPVFDPRHREEAEELRPILVTLDYIQFDTDTPAPPATRELQVGCIRTTQPSPKKPDHPLMVSALLQLRGDVKETYKVIFVAQVLTGP</sequence>
<name>CFA74_HUMAN</name>
<dbReference type="EMBL" id="AK127388">
    <property type="protein sequence ID" value="BAC86954.1"/>
    <property type="molecule type" value="mRNA"/>
</dbReference>
<dbReference type="EMBL" id="AL391845">
    <property type="status" value="NOT_ANNOTATED_CDS"/>
    <property type="molecule type" value="Genomic_DNA"/>
</dbReference>
<dbReference type="EMBL" id="AL109917">
    <property type="status" value="NOT_ANNOTATED_CDS"/>
    <property type="molecule type" value="Genomic_DNA"/>
</dbReference>
<dbReference type="EMBL" id="BC114926">
    <property type="protein sequence ID" value="AAI14927.1"/>
    <property type="status" value="ALT_SEQ"/>
    <property type="molecule type" value="mRNA"/>
</dbReference>
<dbReference type="EMBL" id="BC139754">
    <property type="protein sequence ID" value="AAI39755.1"/>
    <property type="molecule type" value="mRNA"/>
</dbReference>
<dbReference type="EMBL" id="AB051538">
    <property type="protein sequence ID" value="BAB21842.1"/>
    <property type="status" value="ALT_SEQ"/>
    <property type="molecule type" value="mRNA"/>
</dbReference>
<dbReference type="EMBL" id="AL137547">
    <property type="protein sequence ID" value="CAH10703.1"/>
    <property type="status" value="ALT_SEQ"/>
    <property type="molecule type" value="mRNA"/>
</dbReference>
<dbReference type="RefSeq" id="NP_001291289.1">
    <property type="nucleotide sequence ID" value="NM_001304360.1"/>
</dbReference>
<dbReference type="SMR" id="Q9C0B2"/>
<dbReference type="BioGRID" id="124537">
    <property type="interactions" value="10"/>
</dbReference>
<dbReference type="FunCoup" id="Q9C0B2">
    <property type="interactions" value="158"/>
</dbReference>
<dbReference type="IntAct" id="Q9C0B2">
    <property type="interactions" value="12"/>
</dbReference>
<dbReference type="STRING" id="9606.ENSP00000417061"/>
<dbReference type="GlyGen" id="Q9C0B2">
    <property type="glycosylation" value="3 sites, 1 O-linked glycan (3 sites)"/>
</dbReference>
<dbReference type="iPTMnet" id="Q9C0B2"/>
<dbReference type="PhosphoSitePlus" id="Q9C0B2"/>
<dbReference type="BioMuta" id="CFAP74"/>
<dbReference type="DMDM" id="172046227"/>
<dbReference type="jPOST" id="Q9C0B2"/>
<dbReference type="MassIVE" id="Q9C0B2"/>
<dbReference type="PaxDb" id="9606-ENSP00000417061"/>
<dbReference type="PeptideAtlas" id="Q9C0B2"/>
<dbReference type="ProteomicsDB" id="45643"/>
<dbReference type="ProteomicsDB" id="66171"/>
<dbReference type="ProteomicsDB" id="79986">
    <molecule id="Q9C0B2-1"/>
</dbReference>
<dbReference type="ProteomicsDB" id="79987">
    <molecule id="Q9C0B2-2"/>
</dbReference>
<dbReference type="ProteomicsDB" id="79988">
    <molecule id="Q9C0B2-3"/>
</dbReference>
<dbReference type="TopDownProteomics" id="Q9C0B2-2">
    <molecule id="Q9C0B2-2"/>
</dbReference>
<dbReference type="Antibodypedia" id="26630">
    <property type="antibodies" value="32 antibodies from 11 providers"/>
</dbReference>
<dbReference type="DNASU" id="85452"/>
<dbReference type="Ensembl" id="ENST00000493964.5">
    <molecule id="Q9C0B2-1"/>
    <property type="protein sequence ID" value="ENSP00000417061.2"/>
    <property type="gene ID" value="ENSG00000142609.20"/>
</dbReference>
<dbReference type="GeneID" id="85452"/>
<dbReference type="KEGG" id="hsa:85452"/>
<dbReference type="UCSC" id="uc057bjv.1">
    <property type="organism name" value="human"/>
</dbReference>
<dbReference type="AGR" id="HGNC:29368"/>
<dbReference type="CTD" id="85452"/>
<dbReference type="DisGeNET" id="85452"/>
<dbReference type="GeneCards" id="CFAP74"/>
<dbReference type="HGNC" id="HGNC:29368">
    <property type="gene designation" value="CFAP74"/>
</dbReference>
<dbReference type="HPA" id="ENSG00000142609">
    <property type="expression patterns" value="Tissue enhanced (fallopian tube, testis)"/>
</dbReference>
<dbReference type="MalaCards" id="CFAP74"/>
<dbReference type="MIM" id="620187">
    <property type="type" value="gene"/>
</dbReference>
<dbReference type="MIM" id="620197">
    <property type="type" value="phenotype"/>
</dbReference>
<dbReference type="neXtProt" id="NX_Q9C0B2"/>
<dbReference type="OpenTargets" id="ENSG00000142609"/>
<dbReference type="Orphanet" id="244">
    <property type="disease" value="Primary ciliary dyskinesia"/>
</dbReference>
<dbReference type="PharmGKB" id="PA142671598"/>
<dbReference type="VEuPathDB" id="HostDB:ENSG00000142609"/>
<dbReference type="eggNOG" id="ENOG502QPUP">
    <property type="taxonomic scope" value="Eukaryota"/>
</dbReference>
<dbReference type="GeneTree" id="ENSGT00900000141054"/>
<dbReference type="HOGENOM" id="CLU_243984_0_0_1"/>
<dbReference type="InParanoid" id="Q9C0B2"/>
<dbReference type="OMA" id="ENTMWHI"/>
<dbReference type="OrthoDB" id="545169at2759"/>
<dbReference type="PAN-GO" id="Q9C0B2">
    <property type="GO annotations" value="0 GO annotations based on evolutionary models"/>
</dbReference>
<dbReference type="TreeFam" id="TF343713"/>
<dbReference type="PathwayCommons" id="Q9C0B2"/>
<dbReference type="SignaLink" id="Q9C0B2"/>
<dbReference type="BioGRID-ORCS" id="85452">
    <property type="hits" value="4 hits in 234 CRISPR screens"/>
</dbReference>
<dbReference type="ChiTaRS" id="CFAP74">
    <property type="organism name" value="human"/>
</dbReference>
<dbReference type="GenomeRNAi" id="85452"/>
<dbReference type="Pharos" id="Q9C0B2">
    <property type="development level" value="Tdark"/>
</dbReference>
<dbReference type="PRO" id="PR:Q9C0B2"/>
<dbReference type="Proteomes" id="UP000005640">
    <property type="component" value="Chromosome 1"/>
</dbReference>
<dbReference type="RNAct" id="Q9C0B2">
    <property type="molecule type" value="protein"/>
</dbReference>
<dbReference type="Bgee" id="ENSG00000142609">
    <property type="expression patterns" value="Expressed in right uterine tube and 116 other cell types or tissues"/>
</dbReference>
<dbReference type="ExpressionAtlas" id="Q9C0B2">
    <property type="expression patterns" value="baseline and differential"/>
</dbReference>
<dbReference type="GO" id="GO:0005930">
    <property type="term" value="C:axoneme"/>
    <property type="evidence" value="ECO:0000250"/>
    <property type="project" value="UniProtKB"/>
</dbReference>
<dbReference type="GO" id="GO:0005737">
    <property type="term" value="C:cytoplasm"/>
    <property type="evidence" value="ECO:0000315"/>
    <property type="project" value="UniProtKB"/>
</dbReference>
<dbReference type="GO" id="GO:0005634">
    <property type="term" value="C:nucleus"/>
    <property type="evidence" value="ECO:0000315"/>
    <property type="project" value="UniProtKB"/>
</dbReference>
<dbReference type="GO" id="GO:0036126">
    <property type="term" value="C:sperm flagellum"/>
    <property type="evidence" value="ECO:0000315"/>
    <property type="project" value="UniProtKB"/>
</dbReference>
<dbReference type="GO" id="GO:0035082">
    <property type="term" value="P:axoneme assembly"/>
    <property type="evidence" value="ECO:0000250"/>
    <property type="project" value="UniProtKB"/>
</dbReference>
<dbReference type="FunFam" id="2.60.40.10:FF:001959">
    <property type="entry name" value="Cilia and flagella associated protein 74"/>
    <property type="match status" value="1"/>
</dbReference>
<dbReference type="FunFam" id="2.60.40.10:FF:001883">
    <property type="entry name" value="Cilia- and flagella-associated protein 74"/>
    <property type="match status" value="1"/>
</dbReference>
<dbReference type="Gene3D" id="2.60.40.10">
    <property type="entry name" value="Immunoglobulins"/>
    <property type="match status" value="5"/>
</dbReference>
<dbReference type="InterPro" id="IPR056306">
    <property type="entry name" value="Ig-CFAP74_2nd"/>
</dbReference>
<dbReference type="InterPro" id="IPR056307">
    <property type="entry name" value="Ig-CFAP74_3rd"/>
</dbReference>
<dbReference type="InterPro" id="IPR056310">
    <property type="entry name" value="Ig-CFAP74_4th"/>
</dbReference>
<dbReference type="InterPro" id="IPR013783">
    <property type="entry name" value="Ig-like_fold"/>
</dbReference>
<dbReference type="PANTHER" id="PTHR22538">
    <property type="entry name" value="CILIA- AND FLAGELLA-ASSOCIATED PROTEIN 74"/>
    <property type="match status" value="1"/>
</dbReference>
<dbReference type="PANTHER" id="PTHR22538:SF0">
    <property type="entry name" value="CILIA- AND FLAGELLA-ASSOCIATED PROTEIN 74"/>
    <property type="match status" value="1"/>
</dbReference>
<dbReference type="Pfam" id="PF24770">
    <property type="entry name" value="Ig-CFAP74_2"/>
    <property type="match status" value="1"/>
</dbReference>
<dbReference type="Pfam" id="PF24778">
    <property type="entry name" value="Ig-CFAP74_3rd"/>
    <property type="match status" value="1"/>
</dbReference>
<dbReference type="Pfam" id="PF24798">
    <property type="entry name" value="Ig-CFAP74_4th"/>
    <property type="match status" value="1"/>
</dbReference>
<dbReference type="Pfam" id="PF24771">
    <property type="entry name" value="Ig_CFAP74_1st"/>
    <property type="match status" value="1"/>
</dbReference>
<keyword id="KW-0025">Alternative splicing</keyword>
<keyword id="KW-0966">Cell projection</keyword>
<keyword id="KW-1186">Ciliopathy</keyword>
<keyword id="KW-0969">Cilium</keyword>
<keyword id="KW-0175">Coiled coil</keyword>
<keyword id="KW-0963">Cytoplasm</keyword>
<keyword id="KW-0206">Cytoskeleton</keyword>
<keyword id="KW-0225">Disease variant</keyword>
<keyword id="KW-0282">Flagellum</keyword>
<keyword id="KW-0990">Primary ciliary dyskinesia</keyword>
<keyword id="KW-1267">Proteomics identification</keyword>
<keyword id="KW-1185">Reference proteome</keyword>
<reference key="1">
    <citation type="journal article" date="2004" name="Nat. Genet.">
        <title>Complete sequencing and characterization of 21,243 full-length human cDNAs.</title>
        <authorList>
            <person name="Ota T."/>
            <person name="Suzuki Y."/>
            <person name="Nishikawa T."/>
            <person name="Otsuki T."/>
            <person name="Sugiyama T."/>
            <person name="Irie R."/>
            <person name="Wakamatsu A."/>
            <person name="Hayashi K."/>
            <person name="Sato H."/>
            <person name="Nagai K."/>
            <person name="Kimura K."/>
            <person name="Makita H."/>
            <person name="Sekine M."/>
            <person name="Obayashi M."/>
            <person name="Nishi T."/>
            <person name="Shibahara T."/>
            <person name="Tanaka T."/>
            <person name="Ishii S."/>
            <person name="Yamamoto J."/>
            <person name="Saito K."/>
            <person name="Kawai Y."/>
            <person name="Isono Y."/>
            <person name="Nakamura Y."/>
            <person name="Nagahari K."/>
            <person name="Murakami K."/>
            <person name="Yasuda T."/>
            <person name="Iwayanagi T."/>
            <person name="Wagatsuma M."/>
            <person name="Shiratori A."/>
            <person name="Sudo H."/>
            <person name="Hosoiri T."/>
            <person name="Kaku Y."/>
            <person name="Kodaira H."/>
            <person name="Kondo H."/>
            <person name="Sugawara M."/>
            <person name="Takahashi M."/>
            <person name="Kanda K."/>
            <person name="Yokoi T."/>
            <person name="Furuya T."/>
            <person name="Kikkawa E."/>
            <person name="Omura Y."/>
            <person name="Abe K."/>
            <person name="Kamihara K."/>
            <person name="Katsuta N."/>
            <person name="Sato K."/>
            <person name="Tanikawa M."/>
            <person name="Yamazaki M."/>
            <person name="Ninomiya K."/>
            <person name="Ishibashi T."/>
            <person name="Yamashita H."/>
            <person name="Murakawa K."/>
            <person name="Fujimori K."/>
            <person name="Tanai H."/>
            <person name="Kimata M."/>
            <person name="Watanabe M."/>
            <person name="Hiraoka S."/>
            <person name="Chiba Y."/>
            <person name="Ishida S."/>
            <person name="Ono Y."/>
            <person name="Takiguchi S."/>
            <person name="Watanabe S."/>
            <person name="Yosida M."/>
            <person name="Hotuta T."/>
            <person name="Kusano J."/>
            <person name="Kanehori K."/>
            <person name="Takahashi-Fujii A."/>
            <person name="Hara H."/>
            <person name="Tanase T.-O."/>
            <person name="Nomura Y."/>
            <person name="Togiya S."/>
            <person name="Komai F."/>
            <person name="Hara R."/>
            <person name="Takeuchi K."/>
            <person name="Arita M."/>
            <person name="Imose N."/>
            <person name="Musashino K."/>
            <person name="Yuuki H."/>
            <person name="Oshima A."/>
            <person name="Sasaki N."/>
            <person name="Aotsuka S."/>
            <person name="Yoshikawa Y."/>
            <person name="Matsunawa H."/>
            <person name="Ichihara T."/>
            <person name="Shiohata N."/>
            <person name="Sano S."/>
            <person name="Moriya S."/>
            <person name="Momiyama H."/>
            <person name="Satoh N."/>
            <person name="Takami S."/>
            <person name="Terashima Y."/>
            <person name="Suzuki O."/>
            <person name="Nakagawa S."/>
            <person name="Senoh A."/>
            <person name="Mizoguchi H."/>
            <person name="Goto Y."/>
            <person name="Shimizu F."/>
            <person name="Wakebe H."/>
            <person name="Hishigaki H."/>
            <person name="Watanabe T."/>
            <person name="Sugiyama A."/>
            <person name="Takemoto M."/>
            <person name="Kawakami B."/>
            <person name="Yamazaki M."/>
            <person name="Watanabe K."/>
            <person name="Kumagai A."/>
            <person name="Itakura S."/>
            <person name="Fukuzumi Y."/>
            <person name="Fujimori Y."/>
            <person name="Komiyama M."/>
            <person name="Tashiro H."/>
            <person name="Tanigami A."/>
            <person name="Fujiwara T."/>
            <person name="Ono T."/>
            <person name="Yamada K."/>
            <person name="Fujii Y."/>
            <person name="Ozaki K."/>
            <person name="Hirao M."/>
            <person name="Ohmori Y."/>
            <person name="Kawabata A."/>
            <person name="Hikiji T."/>
            <person name="Kobatake N."/>
            <person name="Inagaki H."/>
            <person name="Ikema Y."/>
            <person name="Okamoto S."/>
            <person name="Okitani R."/>
            <person name="Kawakami T."/>
            <person name="Noguchi S."/>
            <person name="Itoh T."/>
            <person name="Shigeta K."/>
            <person name="Senba T."/>
            <person name="Matsumura K."/>
            <person name="Nakajima Y."/>
            <person name="Mizuno T."/>
            <person name="Morinaga M."/>
            <person name="Sasaki M."/>
            <person name="Togashi T."/>
            <person name="Oyama M."/>
            <person name="Hata H."/>
            <person name="Watanabe M."/>
            <person name="Komatsu T."/>
            <person name="Mizushima-Sugano J."/>
            <person name="Satoh T."/>
            <person name="Shirai Y."/>
            <person name="Takahashi Y."/>
            <person name="Nakagawa K."/>
            <person name="Okumura K."/>
            <person name="Nagase T."/>
            <person name="Nomura N."/>
            <person name="Kikuchi H."/>
            <person name="Masuho Y."/>
            <person name="Yamashita R."/>
            <person name="Nakai K."/>
            <person name="Yada T."/>
            <person name="Nakamura Y."/>
            <person name="Ohara O."/>
            <person name="Isogai T."/>
            <person name="Sugano S."/>
        </authorList>
    </citation>
    <scope>NUCLEOTIDE SEQUENCE [LARGE SCALE MRNA] (ISOFORM 3)</scope>
</reference>
<reference key="2">
    <citation type="journal article" date="2006" name="Nature">
        <title>The DNA sequence and biological annotation of human chromosome 1.</title>
        <authorList>
            <person name="Gregory S.G."/>
            <person name="Barlow K.F."/>
            <person name="McLay K.E."/>
            <person name="Kaul R."/>
            <person name="Swarbreck D."/>
            <person name="Dunham A."/>
            <person name="Scott C.E."/>
            <person name="Howe K.L."/>
            <person name="Woodfine K."/>
            <person name="Spencer C.C.A."/>
            <person name="Jones M.C."/>
            <person name="Gillson C."/>
            <person name="Searle S."/>
            <person name="Zhou Y."/>
            <person name="Kokocinski F."/>
            <person name="McDonald L."/>
            <person name="Evans R."/>
            <person name="Phillips K."/>
            <person name="Atkinson A."/>
            <person name="Cooper R."/>
            <person name="Jones C."/>
            <person name="Hall R.E."/>
            <person name="Andrews T.D."/>
            <person name="Lloyd C."/>
            <person name="Ainscough R."/>
            <person name="Almeida J.P."/>
            <person name="Ambrose K.D."/>
            <person name="Anderson F."/>
            <person name="Andrew R.W."/>
            <person name="Ashwell R.I.S."/>
            <person name="Aubin K."/>
            <person name="Babbage A.K."/>
            <person name="Bagguley C.L."/>
            <person name="Bailey J."/>
            <person name="Beasley H."/>
            <person name="Bethel G."/>
            <person name="Bird C.P."/>
            <person name="Bray-Allen S."/>
            <person name="Brown J.Y."/>
            <person name="Brown A.J."/>
            <person name="Buckley D."/>
            <person name="Burton J."/>
            <person name="Bye J."/>
            <person name="Carder C."/>
            <person name="Chapman J.C."/>
            <person name="Clark S.Y."/>
            <person name="Clarke G."/>
            <person name="Clee C."/>
            <person name="Cobley V."/>
            <person name="Collier R.E."/>
            <person name="Corby N."/>
            <person name="Coville G.J."/>
            <person name="Davies J."/>
            <person name="Deadman R."/>
            <person name="Dunn M."/>
            <person name="Earthrowl M."/>
            <person name="Ellington A.G."/>
            <person name="Errington H."/>
            <person name="Frankish A."/>
            <person name="Frankland J."/>
            <person name="French L."/>
            <person name="Garner P."/>
            <person name="Garnett J."/>
            <person name="Gay L."/>
            <person name="Ghori M.R.J."/>
            <person name="Gibson R."/>
            <person name="Gilby L.M."/>
            <person name="Gillett W."/>
            <person name="Glithero R.J."/>
            <person name="Grafham D.V."/>
            <person name="Griffiths C."/>
            <person name="Griffiths-Jones S."/>
            <person name="Grocock R."/>
            <person name="Hammond S."/>
            <person name="Harrison E.S.I."/>
            <person name="Hart E."/>
            <person name="Haugen E."/>
            <person name="Heath P.D."/>
            <person name="Holmes S."/>
            <person name="Holt K."/>
            <person name="Howden P.J."/>
            <person name="Hunt A.R."/>
            <person name="Hunt S.E."/>
            <person name="Hunter G."/>
            <person name="Isherwood J."/>
            <person name="James R."/>
            <person name="Johnson C."/>
            <person name="Johnson D."/>
            <person name="Joy A."/>
            <person name="Kay M."/>
            <person name="Kershaw J.K."/>
            <person name="Kibukawa M."/>
            <person name="Kimberley A.M."/>
            <person name="King A."/>
            <person name="Knights A.J."/>
            <person name="Lad H."/>
            <person name="Laird G."/>
            <person name="Lawlor S."/>
            <person name="Leongamornlert D.A."/>
            <person name="Lloyd D.M."/>
            <person name="Loveland J."/>
            <person name="Lovell J."/>
            <person name="Lush M.J."/>
            <person name="Lyne R."/>
            <person name="Martin S."/>
            <person name="Mashreghi-Mohammadi M."/>
            <person name="Matthews L."/>
            <person name="Matthews N.S.W."/>
            <person name="McLaren S."/>
            <person name="Milne S."/>
            <person name="Mistry S."/>
            <person name="Moore M.J.F."/>
            <person name="Nickerson T."/>
            <person name="O'Dell C.N."/>
            <person name="Oliver K."/>
            <person name="Palmeiri A."/>
            <person name="Palmer S.A."/>
            <person name="Parker A."/>
            <person name="Patel D."/>
            <person name="Pearce A.V."/>
            <person name="Peck A.I."/>
            <person name="Pelan S."/>
            <person name="Phelps K."/>
            <person name="Phillimore B.J."/>
            <person name="Plumb R."/>
            <person name="Rajan J."/>
            <person name="Raymond C."/>
            <person name="Rouse G."/>
            <person name="Saenphimmachak C."/>
            <person name="Sehra H.K."/>
            <person name="Sheridan E."/>
            <person name="Shownkeen R."/>
            <person name="Sims S."/>
            <person name="Skuce C.D."/>
            <person name="Smith M."/>
            <person name="Steward C."/>
            <person name="Subramanian S."/>
            <person name="Sycamore N."/>
            <person name="Tracey A."/>
            <person name="Tromans A."/>
            <person name="Van Helmond Z."/>
            <person name="Wall M."/>
            <person name="Wallis J.M."/>
            <person name="White S."/>
            <person name="Whitehead S.L."/>
            <person name="Wilkinson J.E."/>
            <person name="Willey D.L."/>
            <person name="Williams H."/>
            <person name="Wilming L."/>
            <person name="Wray P.W."/>
            <person name="Wu Z."/>
            <person name="Coulson A."/>
            <person name="Vaudin M."/>
            <person name="Sulston J.E."/>
            <person name="Durbin R.M."/>
            <person name="Hubbard T."/>
            <person name="Wooster R."/>
            <person name="Dunham I."/>
            <person name="Carter N.P."/>
            <person name="McVean G."/>
            <person name="Ross M.T."/>
            <person name="Harrow J."/>
            <person name="Olson M.V."/>
            <person name="Beck S."/>
            <person name="Rogers J."/>
            <person name="Bentley D.R."/>
        </authorList>
    </citation>
    <scope>NUCLEOTIDE SEQUENCE [LARGE SCALE GENOMIC DNA]</scope>
</reference>
<reference key="3">
    <citation type="journal article" date="2004" name="Genome Res.">
        <title>The status, quality, and expansion of the NIH full-length cDNA project: the Mammalian Gene Collection (MGC).</title>
        <authorList>
            <consortium name="The MGC Project Team"/>
        </authorList>
    </citation>
    <scope>NUCLEOTIDE SEQUENCE [LARGE SCALE MRNA] (ISOFORM 2)</scope>
</reference>
<reference key="4">
    <citation type="journal article" date="2000" name="DNA Res.">
        <title>Prediction of the coding sequences of unidentified human genes. XIX. The complete sequences of 100 new cDNA clones from brain which code for large proteins in vitro.</title>
        <authorList>
            <person name="Nagase T."/>
            <person name="Kikuno R."/>
            <person name="Hattori A."/>
            <person name="Kondo Y."/>
            <person name="Okumura K."/>
            <person name="Ohara O."/>
        </authorList>
    </citation>
    <scope>NUCLEOTIDE SEQUENCE [LARGE SCALE MRNA] OF 59-725 (ISOFORM 1)</scope>
    <source>
        <tissue>Brain</tissue>
    </source>
</reference>
<reference key="5">
    <citation type="journal article" date="2007" name="BMC Genomics">
        <title>The full-ORF clone resource of the German cDNA consortium.</title>
        <authorList>
            <person name="Bechtel S."/>
            <person name="Rosenfelder H."/>
            <person name="Duda A."/>
            <person name="Schmidt C.P."/>
            <person name="Ernst U."/>
            <person name="Wellenreuther R."/>
            <person name="Mehrle A."/>
            <person name="Schuster C."/>
            <person name="Bahr A."/>
            <person name="Bloecker H."/>
            <person name="Heubner D."/>
            <person name="Hoerlein A."/>
            <person name="Michel G."/>
            <person name="Wedler H."/>
            <person name="Koehrer K."/>
            <person name="Ottenwaelder B."/>
            <person name="Poustka A."/>
            <person name="Wiemann S."/>
            <person name="Schupp I."/>
        </authorList>
    </citation>
    <scope>PARTIAL NUCLEOTIDE SEQUENCE [LARGE SCALE MRNA]</scope>
    <source>
        <tissue>Testis</tissue>
    </source>
</reference>
<reference key="6">
    <citation type="journal article" date="2020" name="J. Hum. Genet.">
        <title>Biallelic mutations of CFAP74 may cause human primary ciliary dyskinesia and MMAF phenotype.</title>
        <authorList>
            <person name="Sha Y."/>
            <person name="Wei X."/>
            <person name="Ding L."/>
            <person name="Ji Z."/>
            <person name="Mei L."/>
            <person name="Huang X."/>
            <person name="Su Z."/>
            <person name="Wang W."/>
            <person name="Zhang X."/>
            <person name="Lin S."/>
        </authorList>
    </citation>
    <scope>INVOLVEMENT IN CILD49</scope>
    <scope>VARIANTS CILD49 TRP-218; ASP-328; ASN-1178 AND THR-1444</scope>
    <scope>FUNCTION</scope>
    <scope>SUBCELLULAR LOCATION</scope>
</reference>
<reference key="7">
    <citation type="journal article" date="2022" name="Am. J. Respir. Cell Mol. Biol.">
        <title>Recessive Mutations in CFAP74 Cause Primary Ciliary Dyskinesia with Normal Ciliary Ultrastructure.</title>
        <authorList>
            <person name="Biebach L."/>
            <person name="Cindric S."/>
            <person name="Koenig J."/>
            <person name="Aprea I."/>
            <person name="Dougherty G.W."/>
            <person name="Raidt J."/>
            <person name="Bracht D."/>
            <person name="Ruppel R."/>
            <person name="Schreiber J."/>
            <person name="Hjeij R."/>
            <person name="Olbrich H."/>
            <person name="Omran H."/>
        </authorList>
    </citation>
    <scope>INVOLVEMENT IN CILD49</scope>
</reference>
<feature type="chain" id="PRO_0000324664" description="Cilia- and flagella-associated protein 74" evidence="8">
    <location>
        <begin position="1"/>
        <end position="1584"/>
    </location>
</feature>
<feature type="region of interest" description="Disordered" evidence="3">
    <location>
        <begin position="692"/>
        <end position="739"/>
    </location>
</feature>
<feature type="coiled-coil region" evidence="2">
    <location>
        <begin position="300"/>
        <end position="379"/>
    </location>
</feature>
<feature type="compositionally biased region" description="Polar residues" evidence="3">
    <location>
        <begin position="692"/>
        <end position="706"/>
    </location>
</feature>
<feature type="compositionally biased region" description="Basic and acidic residues" evidence="3">
    <location>
        <begin position="707"/>
        <end position="717"/>
    </location>
</feature>
<feature type="splice variant" id="VSP_032345" description="In isoform 3." evidence="6">
    <location>
        <begin position="168"/>
        <end position="1584"/>
    </location>
</feature>
<feature type="splice variant" id="VSP_057369" description="In isoform 2." evidence="7">
    <original>EPERLTTVIPPSEEQTEITLGEVTEGEIGPFSSIKVPIVFTPVVPGDVQARFKVTFKNPQCPTLHFRVVGVAIDVPVWVPKPSVDLKICMYDRLYQDSVLVHTRSKAALRLKFEVCKELRAHLELL</original>
    <variation>VLFLEWTKMYIHVDANRRLEGTSSIGPAGPARAEPHRAGKRLCGAPWRGRAAGGFCLALQLWLLLDAHQRGEVPRNGRALPSPCLLPCSPPPSGIACVSSLLLLIVFPHTHRDPETSVLLLSVFAW</variation>
    <location>
        <begin position="726"/>
        <end position="851"/>
    </location>
</feature>
<feature type="splice variant" id="VSP_057370" description="In isoform 2." evidence="7">
    <location>
        <begin position="852"/>
        <end position="1584"/>
    </location>
</feature>
<feature type="sequence variant" id="VAR_039873" description="In dbSNP:rs13303083.">
    <original>S</original>
    <variation>I</variation>
    <location>
        <position position="50"/>
    </location>
</feature>
<feature type="sequence variant" id="VAR_088022" description="In CILD49; uncertain significance; dbSNP:rs533425606." evidence="4">
    <original>R</original>
    <variation>W</variation>
    <location>
        <position position="218"/>
    </location>
</feature>
<feature type="sequence variant" id="VAR_088023" description="In CILD49; uncertain significance; dbSNP:rs570149409." evidence="4">
    <original>G</original>
    <variation>D</variation>
    <location>
        <position position="328"/>
    </location>
</feature>
<feature type="sequence variant" id="VAR_039874" description="In dbSNP:rs16824588.">
    <original>I</original>
    <variation>V</variation>
    <location>
        <position position="363"/>
    </location>
</feature>
<feature type="sequence variant" id="VAR_039875" description="In dbSNP:rs3820011.">
    <original>G</original>
    <variation>C</variation>
    <location>
        <position position="628"/>
    </location>
</feature>
<feature type="sequence variant" id="VAR_088024" description="In CILD49; uncertain significance; dbSNP:rs559543526." evidence="4">
    <original>D</original>
    <variation>N</variation>
    <location>
        <position position="1178"/>
    </location>
</feature>
<feature type="sequence variant" id="VAR_088025" description="In CILD49; uncertain significance; dbSNP:rs755467514." evidence="4">
    <original>S</original>
    <variation>T</variation>
    <location>
        <position position="1444"/>
    </location>
</feature>
<feature type="sequence conflict" description="In Ref. 1; BAC86954." evidence="8" ref="1">
    <original>L</original>
    <variation>F</variation>
    <location>
        <position position="18"/>
    </location>
</feature>
<feature type="sequence conflict" description="In Ref. 3; AAI39755." evidence="8" ref="3">
    <original>C</original>
    <variation>R</variation>
    <location>
        <position position="207"/>
    </location>
</feature>
<feature type="sequence conflict" description="In Ref. 3; AAI39755." evidence="8" ref="3">
    <original>L</original>
    <variation>F</variation>
    <location>
        <position position="335"/>
    </location>
</feature>
<proteinExistence type="evidence at protein level"/>
<protein>
    <recommendedName>
        <fullName evidence="8">Cilia- and flagella-associated protein 74</fullName>
    </recommendedName>
</protein>
<evidence type="ECO:0000250" key="1">
    <source>
        <dbReference type="UniProtKB" id="D4P3R7"/>
    </source>
</evidence>
<evidence type="ECO:0000255" key="2"/>
<evidence type="ECO:0000256" key="3">
    <source>
        <dbReference type="SAM" id="MobiDB-lite"/>
    </source>
</evidence>
<evidence type="ECO:0000269" key="4">
    <source>
    </source>
</evidence>
<evidence type="ECO:0000269" key="5">
    <source>
    </source>
</evidence>
<evidence type="ECO:0000303" key="6">
    <source>
    </source>
</evidence>
<evidence type="ECO:0000303" key="7">
    <source>
    </source>
</evidence>
<evidence type="ECO:0000305" key="8"/>
<evidence type="ECO:0000312" key="9">
    <source>
        <dbReference type="EMBL" id="BAB21842.1"/>
    </source>
</evidence>
<evidence type="ECO:0000312" key="10">
    <source>
        <dbReference type="HGNC" id="HGNC:29368"/>
    </source>
</evidence>
<accession>Q9C0B2</accession>
<accession>A4VCI2</accession>
<accession>H7C4E1</accession>
<accession>Q5T2D9</accession>
<accession>Q5T2E0</accession>
<accession>Q69YW0</accession>
<accession>Q6ZSJ4</accession>